<protein>
    <recommendedName>
        <fullName evidence="1">Ribosomal RNA large subunit methyltransferase G</fullName>
        <ecNumber evidence="1">2.1.1.174</ecNumber>
    </recommendedName>
    <alternativeName>
        <fullName evidence="1">23S rRNA m2G1835 methyltransferase</fullName>
    </alternativeName>
    <alternativeName>
        <fullName evidence="1">rRNA (guanine-N(2)-)-methyltransferase RlmG</fullName>
    </alternativeName>
</protein>
<proteinExistence type="inferred from homology"/>
<dbReference type="EC" id="2.1.1.174" evidence="1"/>
<dbReference type="EMBL" id="CP000644">
    <property type="protein sequence ID" value="ABO91194.1"/>
    <property type="status" value="ALT_INIT"/>
    <property type="molecule type" value="Genomic_DNA"/>
</dbReference>
<dbReference type="RefSeq" id="WP_042467131.1">
    <property type="nucleotide sequence ID" value="NC_009348.1"/>
</dbReference>
<dbReference type="SMR" id="A4SQM2"/>
<dbReference type="STRING" id="29491.GCA_000820065_03581"/>
<dbReference type="KEGG" id="asa:ASA_3201"/>
<dbReference type="eggNOG" id="COG2813">
    <property type="taxonomic scope" value="Bacteria"/>
</dbReference>
<dbReference type="HOGENOM" id="CLU_040288_4_0_6"/>
<dbReference type="Proteomes" id="UP000000225">
    <property type="component" value="Chromosome"/>
</dbReference>
<dbReference type="GO" id="GO:0005737">
    <property type="term" value="C:cytoplasm"/>
    <property type="evidence" value="ECO:0007669"/>
    <property type="project" value="UniProtKB-SubCell"/>
</dbReference>
<dbReference type="GO" id="GO:0052916">
    <property type="term" value="F:23S rRNA (guanine(1835)-N(2))-methyltransferase activity"/>
    <property type="evidence" value="ECO:0007669"/>
    <property type="project" value="UniProtKB-EC"/>
</dbReference>
<dbReference type="GO" id="GO:0003676">
    <property type="term" value="F:nucleic acid binding"/>
    <property type="evidence" value="ECO:0007669"/>
    <property type="project" value="InterPro"/>
</dbReference>
<dbReference type="CDD" id="cd02440">
    <property type="entry name" value="AdoMet_MTases"/>
    <property type="match status" value="1"/>
</dbReference>
<dbReference type="Gene3D" id="3.40.50.150">
    <property type="entry name" value="Vaccinia Virus protein VP39"/>
    <property type="match status" value="2"/>
</dbReference>
<dbReference type="HAMAP" id="MF_01859">
    <property type="entry name" value="23SrRNA_methyltr_G"/>
    <property type="match status" value="1"/>
</dbReference>
<dbReference type="InterPro" id="IPR002052">
    <property type="entry name" value="DNA_methylase_N6_adenine_CS"/>
</dbReference>
<dbReference type="InterPro" id="IPR017237">
    <property type="entry name" value="rRNA_m2G-MeTrfase_RlmG"/>
</dbReference>
<dbReference type="InterPro" id="IPR046977">
    <property type="entry name" value="RsmC/RlmG"/>
</dbReference>
<dbReference type="InterPro" id="IPR029063">
    <property type="entry name" value="SAM-dependent_MTases_sf"/>
</dbReference>
<dbReference type="InterPro" id="IPR007848">
    <property type="entry name" value="Small_mtfrase_dom"/>
</dbReference>
<dbReference type="PANTHER" id="PTHR47816:SF5">
    <property type="entry name" value="RIBOSOMAL RNA LARGE SUBUNIT METHYLTRANSFERASE G"/>
    <property type="match status" value="1"/>
</dbReference>
<dbReference type="PANTHER" id="PTHR47816">
    <property type="entry name" value="RIBOSOMAL RNA SMALL SUBUNIT METHYLTRANSFERASE C"/>
    <property type="match status" value="1"/>
</dbReference>
<dbReference type="Pfam" id="PF05175">
    <property type="entry name" value="MTS"/>
    <property type="match status" value="1"/>
</dbReference>
<dbReference type="PIRSF" id="PIRSF037565">
    <property type="entry name" value="RRNA_m2G_Mtase_RsmD_prd"/>
    <property type="match status" value="1"/>
</dbReference>
<dbReference type="SUPFAM" id="SSF53335">
    <property type="entry name" value="S-adenosyl-L-methionine-dependent methyltransferases"/>
    <property type="match status" value="1"/>
</dbReference>
<feature type="chain" id="PRO_0000366445" description="Ribosomal RNA large subunit methyltransferase G">
    <location>
        <begin position="1"/>
        <end position="377"/>
    </location>
</feature>
<sequence length="377" mass="41548">MQTLLDTAHCRLTLYRYPRQSQDPLQAWDAADEYLINTLAETPLEQAGPVIIMNDGFGALAAFLHPHAPVCVSDSYISERATLANLAENELDPHAIRLQDALAPLPLAPALVVIKVSKYQALLEQQLLALRAVVTPATRVIAAGKAKDIHSSTLALFEKYLGPTRTSLAWKKARLIHCEPQAMQPELANPYPTVWPLEGTGMLIHNHANVFSRTSLDIGARFMLDNLPVHSARKVIDLGCGNGVLGLALLAKDPEVEVTFIDESHMAVASARLNVEHNLPDALPRARFMVNNCLDDVAVGAADRILCNPPFHQLQAITDHIAWQMFSDAHRVLPQGGELWIVGNRHLDYHNKLKRLFANAQVVASNSKFVILKAIKR</sequence>
<name>RLMG_AERS4</name>
<organism>
    <name type="scientific">Aeromonas salmonicida (strain A449)</name>
    <dbReference type="NCBI Taxonomy" id="382245"/>
    <lineage>
        <taxon>Bacteria</taxon>
        <taxon>Pseudomonadati</taxon>
        <taxon>Pseudomonadota</taxon>
        <taxon>Gammaproteobacteria</taxon>
        <taxon>Aeromonadales</taxon>
        <taxon>Aeromonadaceae</taxon>
        <taxon>Aeromonas</taxon>
    </lineage>
</organism>
<keyword id="KW-0963">Cytoplasm</keyword>
<keyword id="KW-0489">Methyltransferase</keyword>
<keyword id="KW-0698">rRNA processing</keyword>
<keyword id="KW-0949">S-adenosyl-L-methionine</keyword>
<keyword id="KW-0808">Transferase</keyword>
<accession>A4SQM2</accession>
<evidence type="ECO:0000255" key="1">
    <source>
        <dbReference type="HAMAP-Rule" id="MF_01859"/>
    </source>
</evidence>
<evidence type="ECO:0000305" key="2"/>
<comment type="function">
    <text evidence="1">Specifically methylates the guanine in position 1835 (m2G1835) of 23S rRNA.</text>
</comment>
<comment type="catalytic activity">
    <reaction evidence="1">
        <text>guanosine(1835) in 23S rRNA + S-adenosyl-L-methionine = N(2)-methylguanosine(1835) in 23S rRNA + S-adenosyl-L-homocysteine + H(+)</text>
        <dbReference type="Rhea" id="RHEA:42744"/>
        <dbReference type="Rhea" id="RHEA-COMP:10217"/>
        <dbReference type="Rhea" id="RHEA-COMP:10218"/>
        <dbReference type="ChEBI" id="CHEBI:15378"/>
        <dbReference type="ChEBI" id="CHEBI:57856"/>
        <dbReference type="ChEBI" id="CHEBI:59789"/>
        <dbReference type="ChEBI" id="CHEBI:74269"/>
        <dbReference type="ChEBI" id="CHEBI:74481"/>
        <dbReference type="EC" id="2.1.1.174"/>
    </reaction>
</comment>
<comment type="subcellular location">
    <subcellularLocation>
        <location evidence="1">Cytoplasm</location>
    </subcellularLocation>
</comment>
<comment type="similarity">
    <text evidence="1">Belongs to the methyltransferase superfamily. RlmG family.</text>
</comment>
<comment type="sequence caution" evidence="2">
    <conflict type="erroneous initiation">
        <sequence resource="EMBL-CDS" id="ABO91194"/>
    </conflict>
</comment>
<gene>
    <name evidence="1" type="primary">rlmG</name>
    <name type="ordered locus">ASA_3201</name>
</gene>
<reference key="1">
    <citation type="journal article" date="2008" name="BMC Genomics">
        <title>The genome of Aeromonas salmonicida subsp. salmonicida A449: insights into the evolution of a fish pathogen.</title>
        <authorList>
            <person name="Reith M.E."/>
            <person name="Singh R.K."/>
            <person name="Curtis B."/>
            <person name="Boyd J.M."/>
            <person name="Bouevitch A."/>
            <person name="Kimball J."/>
            <person name="Munholland J."/>
            <person name="Murphy C."/>
            <person name="Sarty D."/>
            <person name="Williams J."/>
            <person name="Nash J.H."/>
            <person name="Johnson S.C."/>
            <person name="Brown L.L."/>
        </authorList>
    </citation>
    <scope>NUCLEOTIDE SEQUENCE [LARGE SCALE GENOMIC DNA]</scope>
    <source>
        <strain>A449</strain>
    </source>
</reference>